<keyword id="KW-0002">3D-structure</keyword>
<keyword id="KW-0238">DNA-binding</keyword>
<keyword id="KW-1185">Reference proteome</keyword>
<keyword id="KW-1277">Toxin-antitoxin system</keyword>
<reference key="1">
    <citation type="journal article" date="1998" name="Nature">
        <title>Deciphering the biology of Mycobacterium tuberculosis from the complete genome sequence.</title>
        <authorList>
            <person name="Cole S.T."/>
            <person name="Brosch R."/>
            <person name="Parkhill J."/>
            <person name="Garnier T."/>
            <person name="Churcher C.M."/>
            <person name="Harris D.E."/>
            <person name="Gordon S.V."/>
            <person name="Eiglmeier K."/>
            <person name="Gas S."/>
            <person name="Barry C.E. III"/>
            <person name="Tekaia F."/>
            <person name="Badcock K."/>
            <person name="Basham D."/>
            <person name="Brown D."/>
            <person name="Chillingworth T."/>
            <person name="Connor R."/>
            <person name="Davies R.M."/>
            <person name="Devlin K."/>
            <person name="Feltwell T."/>
            <person name="Gentles S."/>
            <person name="Hamlin N."/>
            <person name="Holroyd S."/>
            <person name="Hornsby T."/>
            <person name="Jagels K."/>
            <person name="Krogh A."/>
            <person name="McLean J."/>
            <person name="Moule S."/>
            <person name="Murphy L.D."/>
            <person name="Oliver S."/>
            <person name="Osborne J."/>
            <person name="Quail M.A."/>
            <person name="Rajandream M.A."/>
            <person name="Rogers J."/>
            <person name="Rutter S."/>
            <person name="Seeger K."/>
            <person name="Skelton S."/>
            <person name="Squares S."/>
            <person name="Squares R."/>
            <person name="Sulston J.E."/>
            <person name="Taylor K."/>
            <person name="Whitehead S."/>
            <person name="Barrell B.G."/>
        </authorList>
    </citation>
    <scope>NUCLEOTIDE SEQUENCE [LARGE SCALE GENOMIC DNA]</scope>
    <source>
        <strain>ATCC 25618 / H37Rv</strain>
    </source>
</reference>
<reference key="2">
    <citation type="journal article" date="2005" name="Nucleic Acids Res.">
        <title>Toxin-antitoxin loci are highly abundant in free-living but lost from host-associated prokaryotes.</title>
        <authorList>
            <person name="Pandey D.P."/>
            <person name="Gerdes K."/>
        </authorList>
    </citation>
    <scope>IDENTIFICATION</scope>
    <scope>POSSIBLE FUNCTION</scope>
    <source>
        <strain>ATCC 25618 / H37Rv</strain>
    </source>
</reference>
<reference key="3">
    <citation type="journal article" date="2006" name="J. Biol. Chem.">
        <title>Characterization of mRNA interferases from Mycobacterium tuberculosis.</title>
        <authorList>
            <person name="Zhu L."/>
            <person name="Zhang Y."/>
            <person name="Teh J.S."/>
            <person name="Zhang J."/>
            <person name="Connell N."/>
            <person name="Rubin H."/>
            <person name="Inouye M."/>
        </authorList>
    </citation>
    <scope>GENE NAME</scope>
    <scope>POSSIBLE FUNCTION</scope>
    <source>
        <strain>ATCC 25618 / H37Rv</strain>
    </source>
</reference>
<reference key="4">
    <citation type="journal article" date="2007" name="FEMS Microbiol. Lett.">
        <title>Expression of Mycobacterium tuberculosis Rv1991c using an arabinose-inducible promoter demonstrates its role as a toxin.</title>
        <authorList>
            <person name="Carroll P."/>
            <person name="Brown A.C."/>
            <person name="Hartridge A.R."/>
            <person name="Parish T."/>
        </authorList>
    </citation>
    <scope>FUNCTION AS AN ANTITOXIN</scope>
</reference>
<reference key="5">
    <citation type="journal article" date="2008" name="FEBS Lett.">
        <title>Biochemical characterization of a chromosomal toxin-antitoxin system in Mycobacterium tuberculosis.</title>
        <authorList>
            <person name="Zhao L."/>
            <person name="Zhang J."/>
        </authorList>
    </citation>
    <scope>EXPRESSION IN E.COLI</scope>
    <scope>EXPRESSION IN M.SMEGMATIS</scope>
    <scope>SUBUNIT</scope>
    <scope>FUNCTION AS AN ANTITOXIN</scope>
    <scope>DNA-BINDING</scope>
    <scope>POSSIBLE FUNCTION AS A TRANSCRIPTIONAL REGULATOR</scope>
    <scope>MUTAGENESIS OF SER-25 AND ARG-26</scope>
    <source>
        <strain>ATCC 25618 / H37Rv</strain>
    </source>
</reference>
<reference key="6">
    <citation type="journal article" date="2009" name="FEMS Microbiol. Lett.">
        <title>Killing activity and rescue function of genome-wide toxin-antitoxin loci of Mycobacterium tuberculosis.</title>
        <authorList>
            <person name="Gupta A."/>
        </authorList>
    </citation>
    <scope>EXPRESSION IN E.COLI</scope>
    <scope>FUNCTION AS AN ANTITOXIN</scope>
    <source>
        <strain>ATCC 25618 / H37Rv</strain>
    </source>
</reference>
<reference key="7">
    <citation type="journal article" date="2009" name="PLoS Genet.">
        <title>Comprehensive functional analysis of Mycobacterium tuberculosis toxin-antitoxin systems: implications for pathogenesis, stress responses, and evolution.</title>
        <authorList>
            <person name="Ramage H.R."/>
            <person name="Connolly L.E."/>
            <person name="Cox J.S."/>
        </authorList>
    </citation>
    <scope>EXPRESSION IN M.SMEGMATIS</scope>
    <scope>FUNCTION AS AN ANTITOXIN</scope>
    <source>
        <strain>ATCC 35801 / TMC 107 / Erdman</strain>
    </source>
</reference>
<reference key="8">
    <citation type="journal article" date="2010" name="J. Biol. Chem.">
        <title>Noncognate Mycobacterium tuberculosis toxin-antitoxins can physically and functionally interact.</title>
        <authorList>
            <person name="Zhu L."/>
            <person name="Sharp J.D."/>
            <person name="Kobayashi H."/>
            <person name="Woychik N.A."/>
            <person name="Inouye M."/>
        </authorList>
    </citation>
    <scope>FUNCTION AS AN ANTITOXIN</scope>
    <scope>INTERACTION WITH TOXINS MAZF6; VAPC27 AND VAPC40</scope>
    <source>
        <strain>ATCC 25618 / H37Rv</strain>
    </source>
</reference>
<reference key="9">
    <citation type="journal article" date="2011" name="Mol. Cell. Proteomics">
        <title>Proteogenomic analysis of Mycobacterium tuberculosis by high resolution mass spectrometry.</title>
        <authorList>
            <person name="Kelkar D.S."/>
            <person name="Kumar D."/>
            <person name="Kumar P."/>
            <person name="Balakrishnan L."/>
            <person name="Muthusamy B."/>
            <person name="Yadav A.K."/>
            <person name="Shrivastava P."/>
            <person name="Marimuthu A."/>
            <person name="Anand S."/>
            <person name="Sundaram H."/>
            <person name="Kingsbury R."/>
            <person name="Harsha H.C."/>
            <person name="Nair B."/>
            <person name="Prasad T.S."/>
            <person name="Chauhan D.S."/>
            <person name="Katoch K."/>
            <person name="Katoch V.M."/>
            <person name="Kumar P."/>
            <person name="Chaerkady R."/>
            <person name="Ramachandran S."/>
            <person name="Dash D."/>
            <person name="Pandey A."/>
        </authorList>
    </citation>
    <scope>IDENTIFICATION BY MASS SPECTROMETRY [LARGE SCALE ANALYSIS]</scope>
    <source>
        <strain>ATCC 25618 / H37Rv</strain>
    </source>
</reference>
<reference key="10">
    <citation type="journal article" date="2015" name="Nat. Commun.">
        <title>MazF ribonucleases promote Mycobacterium tuberculosis drug tolerance and virulence in guinea pigs.</title>
        <authorList>
            <person name="Tiwari P."/>
            <person name="Arora G."/>
            <person name="Singh M."/>
            <person name="Kidwai S."/>
            <person name="Narayan O.P."/>
            <person name="Singh R."/>
        </authorList>
    </citation>
    <scope>INTERACTION WITH MAZF6</scope>
    <scope>INDUCTION</scope>
    <source>
        <strain>H37Rv</strain>
    </source>
</reference>
<comment type="function">
    <text evidence="1 2 3 4 5">Antitoxin component of a type II toxin-antitoxin (TA) system. Upon expression in E.coli and in M.smegmatis counteracts the ribonuclease activity of cognate toxin MazF6.</text>
</comment>
<comment type="subunit">
    <text evidence="2 5 6">Forms a complex with cognate toxin MazF6 which neutralizes the toxin. Interacts physically with non-cognate toxins VapC27 and VapC40.</text>
</comment>
<comment type="induction">
    <text evidence="6">Strongly induced (about 10-fold) by nitrosative stress.</text>
</comment>
<accession>P9WJ87</accession>
<accession>F2GGA0</accession>
<accession>P0CL59</accession>
<accession>Q8VJS6</accession>
<dbReference type="EMBL" id="AL123456">
    <property type="protein sequence ID" value="CCP44763.1"/>
    <property type="molecule type" value="Genomic_DNA"/>
</dbReference>
<dbReference type="RefSeq" id="WP_003410014.1">
    <property type="nucleotide sequence ID" value="NZ_NVQJ01000043.1"/>
</dbReference>
<dbReference type="RefSeq" id="YP_007410673.1">
    <property type="nucleotide sequence ID" value="NC_000962.3"/>
</dbReference>
<dbReference type="PDB" id="7WJ0">
    <property type="method" value="NMR"/>
    <property type="chains" value="A/B=1-49"/>
</dbReference>
<dbReference type="PDB" id="7WNR">
    <property type="method" value="NMR"/>
    <property type="chains" value="B/C=1-49"/>
</dbReference>
<dbReference type="PDBsum" id="7WJ0"/>
<dbReference type="PDBsum" id="7WNR"/>
<dbReference type="SMR" id="P9WJ87"/>
<dbReference type="FunCoup" id="P9WJ87">
    <property type="interactions" value="1"/>
</dbReference>
<dbReference type="STRING" id="83332.Rv1991A"/>
<dbReference type="PaxDb" id="83332-Rv1991A"/>
<dbReference type="GeneID" id="14515890"/>
<dbReference type="KEGG" id="mtu:Rv1991A"/>
<dbReference type="KEGG" id="mtv:RVBD_1991A"/>
<dbReference type="TubercuList" id="Rv1991A"/>
<dbReference type="eggNOG" id="COG0864">
    <property type="taxonomic scope" value="Bacteria"/>
</dbReference>
<dbReference type="InParanoid" id="P9WJ87"/>
<dbReference type="OrthoDB" id="73061at2"/>
<dbReference type="Proteomes" id="UP000001584">
    <property type="component" value="Chromosome"/>
</dbReference>
<dbReference type="GO" id="GO:0003677">
    <property type="term" value="F:DNA binding"/>
    <property type="evidence" value="ECO:0000314"/>
    <property type="project" value="MTBBASE"/>
</dbReference>
<dbReference type="GO" id="GO:0097351">
    <property type="term" value="F:toxin sequestering activity"/>
    <property type="evidence" value="ECO:0000353"/>
    <property type="project" value="MTBBASE"/>
</dbReference>
<dbReference type="GO" id="GO:0098754">
    <property type="term" value="P:detoxification"/>
    <property type="evidence" value="ECO:0000315"/>
    <property type="project" value="MTBBASE"/>
</dbReference>
<dbReference type="GO" id="GO:0045926">
    <property type="term" value="P:negative regulation of growth"/>
    <property type="evidence" value="ECO:0000315"/>
    <property type="project" value="MTBBASE"/>
</dbReference>
<dbReference type="GO" id="GO:0006355">
    <property type="term" value="P:regulation of DNA-templated transcription"/>
    <property type="evidence" value="ECO:0007669"/>
    <property type="project" value="InterPro"/>
</dbReference>
<dbReference type="Gene3D" id="1.10.1220.10">
    <property type="entry name" value="Met repressor-like"/>
    <property type="match status" value="1"/>
</dbReference>
<dbReference type="InterPro" id="IPR013321">
    <property type="entry name" value="Arc_rbn_hlx_hlx"/>
</dbReference>
<dbReference type="InterPro" id="IPR002145">
    <property type="entry name" value="CopG"/>
</dbReference>
<dbReference type="InterPro" id="IPR010985">
    <property type="entry name" value="Ribbon_hlx_hlx"/>
</dbReference>
<dbReference type="Pfam" id="PF01402">
    <property type="entry name" value="RHH_1"/>
    <property type="match status" value="1"/>
</dbReference>
<dbReference type="SUPFAM" id="SSF47598">
    <property type="entry name" value="Ribbon-helix-helix"/>
    <property type="match status" value="1"/>
</dbReference>
<gene>
    <name type="primary">mazE6</name>
    <name evidence="7" type="synonym">mazE-mt3</name>
    <name type="ordered locus">Rv1991A</name>
</gene>
<feature type="chain" id="PRO_0000406300" description="Antitoxin MazE6">
    <location>
        <begin position="1"/>
        <end position="82"/>
    </location>
</feature>
<feature type="mutagenesis site" description="No DNA-binding." evidence="2">
    <original>S</original>
    <variation>A</variation>
    <location>
        <position position="25"/>
    </location>
</feature>
<feature type="mutagenesis site" description="No DNA-binding." evidence="2">
    <original>R</original>
    <variation>A</variation>
    <location>
        <position position="26"/>
    </location>
</feature>
<feature type="strand" evidence="9">
    <location>
        <begin position="2"/>
        <end position="6"/>
    </location>
</feature>
<feature type="helix" evidence="9">
    <location>
        <begin position="9"/>
        <end position="22"/>
    </location>
</feature>
<feature type="helix" evidence="9">
    <location>
        <begin position="26"/>
        <end position="48"/>
    </location>
</feature>
<evidence type="ECO:0000269" key="1">
    <source>
    </source>
</evidence>
<evidence type="ECO:0000269" key="2">
    <source>
    </source>
</evidence>
<evidence type="ECO:0000269" key="3">
    <source>
    </source>
</evidence>
<evidence type="ECO:0000269" key="4">
    <source>
    </source>
</evidence>
<evidence type="ECO:0000269" key="5">
    <source>
    </source>
</evidence>
<evidence type="ECO:0000269" key="6">
    <source>
    </source>
</evidence>
<evidence type="ECO:0000303" key="7">
    <source>
    </source>
</evidence>
<evidence type="ECO:0000305" key="8"/>
<evidence type="ECO:0007829" key="9">
    <source>
        <dbReference type="PDB" id="7WJ0"/>
    </source>
</evidence>
<proteinExistence type="evidence at protein level"/>
<name>MAZE6_MYCTU</name>
<sequence length="82" mass="9290">MKTAISLPDETFDRVSRRASELGMSRSEFFTKAAQRYLHELDAQLLTGQIDRALESIHGTDEAEALAVANAYRVLETMDDEW</sequence>
<protein>
    <recommendedName>
        <fullName evidence="8">Antitoxin MazE6</fullName>
    </recommendedName>
</protein>
<organism>
    <name type="scientific">Mycobacterium tuberculosis (strain ATCC 25618 / H37Rv)</name>
    <dbReference type="NCBI Taxonomy" id="83332"/>
    <lineage>
        <taxon>Bacteria</taxon>
        <taxon>Bacillati</taxon>
        <taxon>Actinomycetota</taxon>
        <taxon>Actinomycetes</taxon>
        <taxon>Mycobacteriales</taxon>
        <taxon>Mycobacteriaceae</taxon>
        <taxon>Mycobacterium</taxon>
        <taxon>Mycobacterium tuberculosis complex</taxon>
    </lineage>
</organism>